<comment type="function">
    <text evidence="1">Part of the phosphoribosylformylglycinamidine synthase complex involved in the purines biosynthetic pathway. Catalyzes the ATP-dependent conversion of formylglycinamide ribonucleotide (FGAR) and glutamine to yield formylglycinamidine ribonucleotide (FGAM) and glutamate. The FGAM synthase complex is composed of three subunits. PurQ produces an ammonia molecule by converting glutamine to glutamate. PurL transfers the ammonia molecule to FGAR to form FGAM in an ATP-dependent manner. PurS interacts with PurQ and PurL and is thought to assist in the transfer of the ammonia molecule from PurQ to PurL.</text>
</comment>
<comment type="catalytic activity">
    <reaction evidence="1">
        <text>N(2)-formyl-N(1)-(5-phospho-beta-D-ribosyl)glycinamide + L-glutamine + ATP + H2O = 2-formamido-N(1)-(5-O-phospho-beta-D-ribosyl)acetamidine + L-glutamate + ADP + phosphate + H(+)</text>
        <dbReference type="Rhea" id="RHEA:17129"/>
        <dbReference type="ChEBI" id="CHEBI:15377"/>
        <dbReference type="ChEBI" id="CHEBI:15378"/>
        <dbReference type="ChEBI" id="CHEBI:29985"/>
        <dbReference type="ChEBI" id="CHEBI:30616"/>
        <dbReference type="ChEBI" id="CHEBI:43474"/>
        <dbReference type="ChEBI" id="CHEBI:58359"/>
        <dbReference type="ChEBI" id="CHEBI:147286"/>
        <dbReference type="ChEBI" id="CHEBI:147287"/>
        <dbReference type="ChEBI" id="CHEBI:456216"/>
        <dbReference type="EC" id="6.3.5.3"/>
    </reaction>
</comment>
<comment type="pathway">
    <text evidence="1">Purine metabolism; IMP biosynthesis via de novo pathway; 5-amino-1-(5-phospho-D-ribosyl)imidazole from N(2)-formyl-N(1)-(5-phospho-D-ribosyl)glycinamide: step 1/2.</text>
</comment>
<comment type="subunit">
    <text evidence="1">Monomer. Part of the FGAM synthase complex composed of 1 PurL, 1 PurQ and 2 PurS subunits.</text>
</comment>
<comment type="subcellular location">
    <subcellularLocation>
        <location evidence="1">Cytoplasm</location>
    </subcellularLocation>
</comment>
<comment type="similarity">
    <text evidence="1">Belongs to the FGAMS family.</text>
</comment>
<reference key="1">
    <citation type="submission" date="2005-08" db="EMBL/GenBank/DDBJ databases">
        <title>Complete sequence of Chlorobium chlorochromatii CaD3.</title>
        <authorList>
            <consortium name="US DOE Joint Genome Institute"/>
            <person name="Copeland A."/>
            <person name="Lucas S."/>
            <person name="Lapidus A."/>
            <person name="Barry K."/>
            <person name="Detter J.C."/>
            <person name="Glavina T."/>
            <person name="Hammon N."/>
            <person name="Israni S."/>
            <person name="Pitluck S."/>
            <person name="Bryant D."/>
            <person name="Schmutz J."/>
            <person name="Larimer F."/>
            <person name="Land M."/>
            <person name="Kyrpides N."/>
            <person name="Ivanova N."/>
            <person name="Richardson P."/>
        </authorList>
    </citation>
    <scope>NUCLEOTIDE SEQUENCE [LARGE SCALE GENOMIC DNA]</scope>
    <source>
        <strain>CaD3</strain>
    </source>
</reference>
<protein>
    <recommendedName>
        <fullName evidence="1">Phosphoribosylformylglycinamidine synthase subunit PurL</fullName>
        <shortName evidence="1">FGAM synthase</shortName>
        <ecNumber evidence="1">6.3.5.3</ecNumber>
    </recommendedName>
    <alternativeName>
        <fullName evidence="1">Formylglycinamide ribonucleotide amidotransferase subunit II</fullName>
        <shortName evidence="1">FGAR amidotransferase II</shortName>
        <shortName evidence="1">FGAR-AT II</shortName>
    </alternativeName>
    <alternativeName>
        <fullName evidence="1">Glutamine amidotransferase PurL</fullName>
    </alternativeName>
    <alternativeName>
        <fullName evidence="1">Phosphoribosylformylglycinamidine synthase subunit II</fullName>
    </alternativeName>
</protein>
<dbReference type="EC" id="6.3.5.3" evidence="1"/>
<dbReference type="EMBL" id="CP000108">
    <property type="protein sequence ID" value="ABB28281.1"/>
    <property type="molecule type" value="Genomic_DNA"/>
</dbReference>
<dbReference type="SMR" id="Q3ARU4"/>
<dbReference type="STRING" id="340177.Cag_1019"/>
<dbReference type="KEGG" id="cch:Cag_1019"/>
<dbReference type="eggNOG" id="COG0046">
    <property type="taxonomic scope" value="Bacteria"/>
</dbReference>
<dbReference type="HOGENOM" id="CLU_003100_0_1_10"/>
<dbReference type="OrthoDB" id="9804441at2"/>
<dbReference type="UniPathway" id="UPA00074">
    <property type="reaction ID" value="UER00128"/>
</dbReference>
<dbReference type="GO" id="GO:0005737">
    <property type="term" value="C:cytoplasm"/>
    <property type="evidence" value="ECO:0007669"/>
    <property type="project" value="UniProtKB-SubCell"/>
</dbReference>
<dbReference type="GO" id="GO:0005524">
    <property type="term" value="F:ATP binding"/>
    <property type="evidence" value="ECO:0007669"/>
    <property type="project" value="UniProtKB-UniRule"/>
</dbReference>
<dbReference type="GO" id="GO:0000287">
    <property type="term" value="F:magnesium ion binding"/>
    <property type="evidence" value="ECO:0007669"/>
    <property type="project" value="UniProtKB-UniRule"/>
</dbReference>
<dbReference type="GO" id="GO:0004642">
    <property type="term" value="F:phosphoribosylformylglycinamidine synthase activity"/>
    <property type="evidence" value="ECO:0007669"/>
    <property type="project" value="UniProtKB-UniRule"/>
</dbReference>
<dbReference type="GO" id="GO:0006189">
    <property type="term" value="P:'de novo' IMP biosynthetic process"/>
    <property type="evidence" value="ECO:0007669"/>
    <property type="project" value="UniProtKB-UniRule"/>
</dbReference>
<dbReference type="CDD" id="cd02203">
    <property type="entry name" value="PurL_repeat1"/>
    <property type="match status" value="1"/>
</dbReference>
<dbReference type="CDD" id="cd02204">
    <property type="entry name" value="PurL_repeat2"/>
    <property type="match status" value="1"/>
</dbReference>
<dbReference type="FunFam" id="3.30.1330.10:FF:000004">
    <property type="entry name" value="Phosphoribosylformylglycinamidine synthase subunit PurL"/>
    <property type="match status" value="1"/>
</dbReference>
<dbReference type="Gene3D" id="3.90.650.10">
    <property type="entry name" value="PurM-like C-terminal domain"/>
    <property type="match status" value="2"/>
</dbReference>
<dbReference type="Gene3D" id="3.30.1330.10">
    <property type="entry name" value="PurM-like, N-terminal domain"/>
    <property type="match status" value="2"/>
</dbReference>
<dbReference type="HAMAP" id="MF_00420">
    <property type="entry name" value="PurL_2"/>
    <property type="match status" value="1"/>
</dbReference>
<dbReference type="InterPro" id="IPR010074">
    <property type="entry name" value="PRibForGlyAmidine_synth_PurL"/>
</dbReference>
<dbReference type="InterPro" id="IPR041609">
    <property type="entry name" value="PurL_linker"/>
</dbReference>
<dbReference type="InterPro" id="IPR010918">
    <property type="entry name" value="PurM-like_C_dom"/>
</dbReference>
<dbReference type="InterPro" id="IPR036676">
    <property type="entry name" value="PurM-like_C_sf"/>
</dbReference>
<dbReference type="InterPro" id="IPR016188">
    <property type="entry name" value="PurM-like_N"/>
</dbReference>
<dbReference type="InterPro" id="IPR036921">
    <property type="entry name" value="PurM-like_N_sf"/>
</dbReference>
<dbReference type="NCBIfam" id="TIGR01736">
    <property type="entry name" value="FGAM_synth_II"/>
    <property type="match status" value="1"/>
</dbReference>
<dbReference type="NCBIfam" id="NF002290">
    <property type="entry name" value="PRK01213.1"/>
    <property type="match status" value="1"/>
</dbReference>
<dbReference type="PANTHER" id="PTHR43555">
    <property type="entry name" value="PHOSPHORIBOSYLFORMYLGLYCINAMIDINE SYNTHASE SUBUNIT PURL"/>
    <property type="match status" value="1"/>
</dbReference>
<dbReference type="PANTHER" id="PTHR43555:SF1">
    <property type="entry name" value="PHOSPHORIBOSYLFORMYLGLYCINAMIDINE SYNTHASE SUBUNIT PURL"/>
    <property type="match status" value="1"/>
</dbReference>
<dbReference type="Pfam" id="PF00586">
    <property type="entry name" value="AIRS"/>
    <property type="match status" value="2"/>
</dbReference>
<dbReference type="Pfam" id="PF02769">
    <property type="entry name" value="AIRS_C"/>
    <property type="match status" value="2"/>
</dbReference>
<dbReference type="Pfam" id="PF18072">
    <property type="entry name" value="FGAR-AT_linker"/>
    <property type="match status" value="1"/>
</dbReference>
<dbReference type="PIRSF" id="PIRSF001587">
    <property type="entry name" value="FGAM_synthase_II"/>
    <property type="match status" value="1"/>
</dbReference>
<dbReference type="SUPFAM" id="SSF56042">
    <property type="entry name" value="PurM C-terminal domain-like"/>
    <property type="match status" value="2"/>
</dbReference>
<dbReference type="SUPFAM" id="SSF55326">
    <property type="entry name" value="PurM N-terminal domain-like"/>
    <property type="match status" value="2"/>
</dbReference>
<feature type="chain" id="PRO_0000236651" description="Phosphoribosylformylglycinamidine synthase subunit PurL">
    <location>
        <begin position="1"/>
        <end position="761"/>
    </location>
</feature>
<feature type="active site" evidence="1">
    <location>
        <position position="49"/>
    </location>
</feature>
<feature type="active site" description="Proton acceptor" evidence="1">
    <location>
        <position position="96"/>
    </location>
</feature>
<feature type="binding site" evidence="1">
    <location>
        <position position="52"/>
    </location>
    <ligand>
        <name>ATP</name>
        <dbReference type="ChEBI" id="CHEBI:30616"/>
    </ligand>
</feature>
<feature type="binding site" evidence="1">
    <location>
        <position position="92"/>
    </location>
    <ligand>
        <name>ATP</name>
        <dbReference type="ChEBI" id="CHEBI:30616"/>
    </ligand>
</feature>
<feature type="binding site" evidence="1">
    <location>
        <position position="94"/>
    </location>
    <ligand>
        <name>Mg(2+)</name>
        <dbReference type="ChEBI" id="CHEBI:18420"/>
        <label>1</label>
    </ligand>
</feature>
<feature type="binding site" evidence="1">
    <location>
        <begin position="95"/>
        <end position="98"/>
    </location>
    <ligand>
        <name>substrate</name>
    </ligand>
</feature>
<feature type="binding site" evidence="1">
    <location>
        <position position="117"/>
    </location>
    <ligand>
        <name>substrate</name>
    </ligand>
</feature>
<feature type="binding site" evidence="1">
    <location>
        <position position="118"/>
    </location>
    <ligand>
        <name>Mg(2+)</name>
        <dbReference type="ChEBI" id="CHEBI:18420"/>
        <label>2</label>
    </ligand>
</feature>
<feature type="binding site" evidence="1">
    <location>
        <position position="241"/>
    </location>
    <ligand>
        <name>substrate</name>
    </ligand>
</feature>
<feature type="binding site" evidence="1">
    <location>
        <position position="269"/>
    </location>
    <ligand>
        <name>Mg(2+)</name>
        <dbReference type="ChEBI" id="CHEBI:18420"/>
        <label>2</label>
    </ligand>
</feature>
<feature type="binding site" evidence="1">
    <location>
        <begin position="318"/>
        <end position="320"/>
    </location>
    <ligand>
        <name>substrate</name>
    </ligand>
</feature>
<feature type="binding site" evidence="1">
    <location>
        <position position="502"/>
    </location>
    <ligand>
        <name>ATP</name>
        <dbReference type="ChEBI" id="CHEBI:30616"/>
    </ligand>
</feature>
<feature type="binding site" evidence="1">
    <location>
        <position position="539"/>
    </location>
    <ligand>
        <name>ATP</name>
        <dbReference type="ChEBI" id="CHEBI:30616"/>
    </ligand>
</feature>
<feature type="binding site" evidence="1">
    <location>
        <position position="540"/>
    </location>
    <ligand>
        <name>Mg(2+)</name>
        <dbReference type="ChEBI" id="CHEBI:18420"/>
        <label>1</label>
    </ligand>
</feature>
<feature type="binding site" evidence="1">
    <location>
        <position position="542"/>
    </location>
    <ligand>
        <name>substrate</name>
    </ligand>
</feature>
<accession>Q3ARU4</accession>
<keyword id="KW-0067">ATP-binding</keyword>
<keyword id="KW-0963">Cytoplasm</keyword>
<keyword id="KW-0436">Ligase</keyword>
<keyword id="KW-0460">Magnesium</keyword>
<keyword id="KW-0479">Metal-binding</keyword>
<keyword id="KW-0547">Nucleotide-binding</keyword>
<keyword id="KW-0658">Purine biosynthesis</keyword>
<evidence type="ECO:0000255" key="1">
    <source>
        <dbReference type="HAMAP-Rule" id="MF_00420"/>
    </source>
</evidence>
<organism>
    <name type="scientific">Chlorobium chlorochromatii (strain CaD3)</name>
    <dbReference type="NCBI Taxonomy" id="340177"/>
    <lineage>
        <taxon>Bacteria</taxon>
        <taxon>Pseudomonadati</taxon>
        <taxon>Chlorobiota</taxon>
        <taxon>Chlorobiia</taxon>
        <taxon>Chlorobiales</taxon>
        <taxon>Chlorobiaceae</taxon>
        <taxon>Chlorobium/Pelodictyon group</taxon>
        <taxon>Chlorobium</taxon>
    </lineage>
</organism>
<gene>
    <name evidence="1" type="primary">purL</name>
    <name type="ordered locus">Cag_1019</name>
</gene>
<sequence>MKHTDIEVTLTHAEEHGLSAEEFSQICTILGRTPTITELGIFSVMWSEHCSYKNSIAVLKTLPREGGALLTSAGEENAGLVDIGDNLAVAFKIESHNHPSAVEPYQGAATGVGGIHRDIFTMGARPVASLNSLRFGSPKDPRVRYLVDGVVRGIGDYGNSFGVPTVAGDIYFEEGYTGNPLVNAMSVGIVEHHKTVSATAYGTGNPVLIVGSSTGRDGIHGATFASEDLSEASEEKRPSVQVGDPFAEKLLLEATLEAIETGYVVGLQDMGAAGITSSTSEMSARGIEKYGVGGIEIDLDLVPIREAGMSAYEIMLSESQERMLIVAAKGFEDKIIEVYQKWDVQAVVIGEVTDDNHVRVKHQGQVVANIPAISLVLGGGAPVYKREAKEKKPETPLANMVADSTLNFNELGLALLSRPNIASKQWVYRQYDSMVQTNTLTPTGQTDAAVIRIKGTNKGVAMKTDCNARYVYLNPLAGGKIAVAECARNIACTGARPLAITNCLNFGNPLKPEVYFQFKESVRGMGEACRTFNTPVTGGNVSFYNETFIAGQRTAIYPTPMIGMIGLLDNIENLVGSTFTASGDRILLLGNPQLTLDGSEYLVMQYGTPGQDAPAVDLEHEAQLQRLLVALAEQKLLHSAHDVSDGGLLVALAEKAMMNQEMPLSFRVHLSNNDKSETAIQQQLFSEAQGRVVLSAAPEAVAAIMALANDYNLPIQDIGEVVNQQTISLSINEQEVVNLPLSNVAHAYYHALEHALHLDEL</sequence>
<name>PURL_CHLCH</name>
<proteinExistence type="inferred from homology"/>